<sequence length="565" mass="62828">MELEYESKRPLYIPYAGPILLEFPLLNKGSAFTNDERNHFNLHGLLPEAVETIEEQAERAYRQYQDFKNDDDKHIYLRNIQDTNETLFYRLLEAHLSEMMPIIYTPTVGEACEHFSDIYRRARGLFISYPNREHIDDMLQNATKQNVKVIVVTDGERILGLGDQGIGGMGIPIGKLSLYTACGGISPAYTLPVVLDVGTNNPQRLNDPLYMGWRHPRISGDEYYAFVDEFIQAVKRRWPNVLLQFEDFAQKNATPLLNRYRDELCCFNDDIQGTAAVTLGSLIAASHAAGSQLRDQTVTFLGAGSAGCGIAEQIIAQMMSEGLSEIQARARIFMVDRFGLLTDKLPNLLDFQSKLVQKSDDLHHWNLHNDAISLLDVVRNAKPTVLIGVSGQPGLFTEELIREMHSHCARPIVMPLSNPTSRVEARPEDIINWTDGAALVATGSPFPPVSYKEKLYPIAQCNNSYIFPGIGLGVLASGASRVTDGMLMAASRALAESSPLARHGEGALLPNIDDIQAVSKAIAMRVGQAAQLQGVAIVTSEEALSKAIEHNYWQPQYRSYKRTSF</sequence>
<accession>Q8ZG09</accession>
<accession>Q0WGR1</accession>
<accession>Q74VB1</accession>
<accession>Q7CHQ5</accession>
<evidence type="ECO:0000255" key="1">
    <source>
        <dbReference type="HAMAP-Rule" id="MF_01619"/>
    </source>
</evidence>
<protein>
    <recommendedName>
        <fullName evidence="1">NAD-dependent malic enzyme</fullName>
        <shortName evidence="1">NAD-ME</shortName>
        <ecNumber evidence="1">1.1.1.38</ecNumber>
    </recommendedName>
</protein>
<feature type="chain" id="PRO_0000160240" description="NAD-dependent malic enzyme">
    <location>
        <begin position="1"/>
        <end position="565"/>
    </location>
</feature>
<feature type="active site" description="Proton donor" evidence="1">
    <location>
        <position position="104"/>
    </location>
</feature>
<feature type="active site" description="Proton acceptor" evidence="1">
    <location>
        <position position="175"/>
    </location>
</feature>
<feature type="binding site" evidence="1">
    <location>
        <position position="157"/>
    </location>
    <ligand>
        <name>NAD(+)</name>
        <dbReference type="ChEBI" id="CHEBI:57540"/>
    </ligand>
</feature>
<feature type="binding site" evidence="1">
    <location>
        <position position="246"/>
    </location>
    <ligand>
        <name>a divalent metal cation</name>
        <dbReference type="ChEBI" id="CHEBI:60240"/>
    </ligand>
</feature>
<feature type="binding site" evidence="1">
    <location>
        <position position="247"/>
    </location>
    <ligand>
        <name>a divalent metal cation</name>
        <dbReference type="ChEBI" id="CHEBI:60240"/>
    </ligand>
</feature>
<feature type="binding site" evidence="1">
    <location>
        <position position="270"/>
    </location>
    <ligand>
        <name>a divalent metal cation</name>
        <dbReference type="ChEBI" id="CHEBI:60240"/>
    </ligand>
</feature>
<feature type="binding site" evidence="1">
    <location>
        <position position="270"/>
    </location>
    <ligand>
        <name>NAD(+)</name>
        <dbReference type="ChEBI" id="CHEBI:57540"/>
    </ligand>
</feature>
<feature type="binding site" evidence="1">
    <location>
        <position position="418"/>
    </location>
    <ligand>
        <name>NAD(+)</name>
        <dbReference type="ChEBI" id="CHEBI:57540"/>
    </ligand>
</feature>
<feature type="site" description="Important for activity" evidence="1">
    <location>
        <position position="270"/>
    </location>
</feature>
<gene>
    <name evidence="1" type="primary">maeA</name>
    <name type="ordered locus">YPO1511</name>
    <name type="ordered locus">y2658</name>
    <name type="ordered locus">YP_1401</name>
</gene>
<proteinExistence type="inferred from homology"/>
<dbReference type="EC" id="1.1.1.38" evidence="1"/>
<dbReference type="EMBL" id="AL590842">
    <property type="protein sequence ID" value="CAL20157.1"/>
    <property type="molecule type" value="Genomic_DNA"/>
</dbReference>
<dbReference type="EMBL" id="AE009952">
    <property type="protein sequence ID" value="AAM86211.1"/>
    <property type="molecule type" value="Genomic_DNA"/>
</dbReference>
<dbReference type="EMBL" id="AE017042">
    <property type="protein sequence ID" value="AAS61642.1"/>
    <property type="molecule type" value="Genomic_DNA"/>
</dbReference>
<dbReference type="PIR" id="AC0184">
    <property type="entry name" value="AC0184"/>
</dbReference>
<dbReference type="RefSeq" id="WP_002211968.1">
    <property type="nucleotide sequence ID" value="NZ_WUCM01000063.1"/>
</dbReference>
<dbReference type="RefSeq" id="YP_002346527.1">
    <property type="nucleotide sequence ID" value="NC_003143.1"/>
</dbReference>
<dbReference type="SMR" id="Q8ZG09"/>
<dbReference type="IntAct" id="Q8ZG09">
    <property type="interactions" value="6"/>
</dbReference>
<dbReference type="STRING" id="214092.YPO1511"/>
<dbReference type="PaxDb" id="214092-YPO1511"/>
<dbReference type="DNASU" id="1147605"/>
<dbReference type="EnsemblBacteria" id="AAS61642">
    <property type="protein sequence ID" value="AAS61642"/>
    <property type="gene ID" value="YP_1401"/>
</dbReference>
<dbReference type="KEGG" id="ype:YPO1511"/>
<dbReference type="KEGG" id="ypk:y2658"/>
<dbReference type="KEGG" id="ypm:YP_1401"/>
<dbReference type="PATRIC" id="fig|214092.21.peg.1844"/>
<dbReference type="eggNOG" id="COG0281">
    <property type="taxonomic scope" value="Bacteria"/>
</dbReference>
<dbReference type="HOGENOM" id="CLU_011405_5_2_6"/>
<dbReference type="OMA" id="QIVNHMV"/>
<dbReference type="OrthoDB" id="3314528at2"/>
<dbReference type="Proteomes" id="UP000000815">
    <property type="component" value="Chromosome"/>
</dbReference>
<dbReference type="Proteomes" id="UP000001019">
    <property type="component" value="Chromosome"/>
</dbReference>
<dbReference type="Proteomes" id="UP000002490">
    <property type="component" value="Chromosome"/>
</dbReference>
<dbReference type="GO" id="GO:0005829">
    <property type="term" value="C:cytosol"/>
    <property type="evidence" value="ECO:0000318"/>
    <property type="project" value="GO_Central"/>
</dbReference>
<dbReference type="GO" id="GO:0004471">
    <property type="term" value="F:malate dehydrogenase (decarboxylating) (NAD+) activity"/>
    <property type="evidence" value="ECO:0007669"/>
    <property type="project" value="UniProtKB-UniRule"/>
</dbReference>
<dbReference type="GO" id="GO:0004470">
    <property type="term" value="F:malic enzyme activity"/>
    <property type="evidence" value="ECO:0000318"/>
    <property type="project" value="GO_Central"/>
</dbReference>
<dbReference type="GO" id="GO:0046872">
    <property type="term" value="F:metal ion binding"/>
    <property type="evidence" value="ECO:0007669"/>
    <property type="project" value="UniProtKB-KW"/>
</dbReference>
<dbReference type="GO" id="GO:0051287">
    <property type="term" value="F:NAD binding"/>
    <property type="evidence" value="ECO:0007669"/>
    <property type="project" value="InterPro"/>
</dbReference>
<dbReference type="GO" id="GO:0008948">
    <property type="term" value="F:oxaloacetate decarboxylase activity"/>
    <property type="evidence" value="ECO:0007669"/>
    <property type="project" value="UniProtKB-UniRule"/>
</dbReference>
<dbReference type="GO" id="GO:0006108">
    <property type="term" value="P:malate metabolic process"/>
    <property type="evidence" value="ECO:0000318"/>
    <property type="project" value="GO_Central"/>
</dbReference>
<dbReference type="GO" id="GO:0006090">
    <property type="term" value="P:pyruvate metabolic process"/>
    <property type="evidence" value="ECO:0000318"/>
    <property type="project" value="GO_Central"/>
</dbReference>
<dbReference type="CDD" id="cd05312">
    <property type="entry name" value="NAD_bind_1_malic_enz"/>
    <property type="match status" value="1"/>
</dbReference>
<dbReference type="FunFam" id="3.40.50.10380:FF:000001">
    <property type="entry name" value="NAD-dependent malic enzyme"/>
    <property type="match status" value="1"/>
</dbReference>
<dbReference type="FunFam" id="3.40.50.720:FF:000055">
    <property type="entry name" value="NAD-dependent malic enzyme"/>
    <property type="match status" value="1"/>
</dbReference>
<dbReference type="Gene3D" id="3.40.50.10380">
    <property type="entry name" value="Malic enzyme, N-terminal domain"/>
    <property type="match status" value="1"/>
</dbReference>
<dbReference type="Gene3D" id="3.40.50.720">
    <property type="entry name" value="NAD(P)-binding Rossmann-like Domain"/>
    <property type="match status" value="1"/>
</dbReference>
<dbReference type="HAMAP" id="MF_01619">
    <property type="entry name" value="NAD_malic_enz"/>
    <property type="match status" value="1"/>
</dbReference>
<dbReference type="InterPro" id="IPR046346">
    <property type="entry name" value="Aminoacid_DH-like_N_sf"/>
</dbReference>
<dbReference type="InterPro" id="IPR015884">
    <property type="entry name" value="Malic_enzyme_CS"/>
</dbReference>
<dbReference type="InterPro" id="IPR012301">
    <property type="entry name" value="Malic_N_dom"/>
</dbReference>
<dbReference type="InterPro" id="IPR037062">
    <property type="entry name" value="Malic_N_dom_sf"/>
</dbReference>
<dbReference type="InterPro" id="IPR012302">
    <property type="entry name" value="Malic_NAD-bd"/>
</dbReference>
<dbReference type="InterPro" id="IPR001891">
    <property type="entry name" value="Malic_OxRdtase"/>
</dbReference>
<dbReference type="InterPro" id="IPR036291">
    <property type="entry name" value="NAD(P)-bd_dom_sf"/>
</dbReference>
<dbReference type="InterPro" id="IPR023667">
    <property type="entry name" value="NAD_malic_enz_proteobac"/>
</dbReference>
<dbReference type="NCBIfam" id="NF010052">
    <property type="entry name" value="PRK13529.1"/>
    <property type="match status" value="1"/>
</dbReference>
<dbReference type="PANTHER" id="PTHR23406">
    <property type="entry name" value="MALIC ENZYME-RELATED"/>
    <property type="match status" value="1"/>
</dbReference>
<dbReference type="PANTHER" id="PTHR23406:SF34">
    <property type="entry name" value="NAD-DEPENDENT MALIC ENZYME, MITOCHONDRIAL"/>
    <property type="match status" value="1"/>
</dbReference>
<dbReference type="Pfam" id="PF00390">
    <property type="entry name" value="malic"/>
    <property type="match status" value="1"/>
</dbReference>
<dbReference type="Pfam" id="PF03949">
    <property type="entry name" value="Malic_M"/>
    <property type="match status" value="1"/>
</dbReference>
<dbReference type="PIRSF" id="PIRSF000106">
    <property type="entry name" value="ME"/>
    <property type="match status" value="1"/>
</dbReference>
<dbReference type="PRINTS" id="PR00072">
    <property type="entry name" value="MALOXRDTASE"/>
</dbReference>
<dbReference type="SMART" id="SM01274">
    <property type="entry name" value="malic"/>
    <property type="match status" value="1"/>
</dbReference>
<dbReference type="SMART" id="SM00919">
    <property type="entry name" value="Malic_M"/>
    <property type="match status" value="1"/>
</dbReference>
<dbReference type="SUPFAM" id="SSF53223">
    <property type="entry name" value="Aminoacid dehydrogenase-like, N-terminal domain"/>
    <property type="match status" value="1"/>
</dbReference>
<dbReference type="SUPFAM" id="SSF51735">
    <property type="entry name" value="NAD(P)-binding Rossmann-fold domains"/>
    <property type="match status" value="1"/>
</dbReference>
<dbReference type="PROSITE" id="PS00331">
    <property type="entry name" value="MALIC_ENZYMES"/>
    <property type="match status" value="1"/>
</dbReference>
<comment type="catalytic activity">
    <reaction evidence="1">
        <text>(S)-malate + NAD(+) = pyruvate + CO2 + NADH</text>
        <dbReference type="Rhea" id="RHEA:12653"/>
        <dbReference type="ChEBI" id="CHEBI:15361"/>
        <dbReference type="ChEBI" id="CHEBI:15589"/>
        <dbReference type="ChEBI" id="CHEBI:16526"/>
        <dbReference type="ChEBI" id="CHEBI:57540"/>
        <dbReference type="ChEBI" id="CHEBI:57945"/>
        <dbReference type="EC" id="1.1.1.38"/>
    </reaction>
</comment>
<comment type="catalytic activity">
    <reaction evidence="1">
        <text>oxaloacetate + H(+) = pyruvate + CO2</text>
        <dbReference type="Rhea" id="RHEA:15641"/>
        <dbReference type="ChEBI" id="CHEBI:15361"/>
        <dbReference type="ChEBI" id="CHEBI:15378"/>
        <dbReference type="ChEBI" id="CHEBI:16452"/>
        <dbReference type="ChEBI" id="CHEBI:16526"/>
        <dbReference type="EC" id="1.1.1.38"/>
    </reaction>
</comment>
<comment type="cofactor">
    <cofactor evidence="1">
        <name>Mg(2+)</name>
        <dbReference type="ChEBI" id="CHEBI:18420"/>
    </cofactor>
    <cofactor evidence="1">
        <name>Mn(2+)</name>
        <dbReference type="ChEBI" id="CHEBI:29035"/>
    </cofactor>
    <text evidence="1">Divalent metal cations. Prefers magnesium or manganese.</text>
</comment>
<comment type="subunit">
    <text evidence="1">Homotetramer.</text>
</comment>
<comment type="similarity">
    <text evidence="1">Belongs to the malic enzymes family.</text>
</comment>
<name>MAO1_YERPE</name>
<organism>
    <name type="scientific">Yersinia pestis</name>
    <dbReference type="NCBI Taxonomy" id="632"/>
    <lineage>
        <taxon>Bacteria</taxon>
        <taxon>Pseudomonadati</taxon>
        <taxon>Pseudomonadota</taxon>
        <taxon>Gammaproteobacteria</taxon>
        <taxon>Enterobacterales</taxon>
        <taxon>Yersiniaceae</taxon>
        <taxon>Yersinia</taxon>
    </lineage>
</organism>
<reference key="1">
    <citation type="journal article" date="2001" name="Nature">
        <title>Genome sequence of Yersinia pestis, the causative agent of plague.</title>
        <authorList>
            <person name="Parkhill J."/>
            <person name="Wren B.W."/>
            <person name="Thomson N.R."/>
            <person name="Titball R.W."/>
            <person name="Holden M.T.G."/>
            <person name="Prentice M.B."/>
            <person name="Sebaihia M."/>
            <person name="James K.D."/>
            <person name="Churcher C.M."/>
            <person name="Mungall K.L."/>
            <person name="Baker S."/>
            <person name="Basham D."/>
            <person name="Bentley S.D."/>
            <person name="Brooks K."/>
            <person name="Cerdeno-Tarraga A.-M."/>
            <person name="Chillingworth T."/>
            <person name="Cronin A."/>
            <person name="Davies R.M."/>
            <person name="Davis P."/>
            <person name="Dougan G."/>
            <person name="Feltwell T."/>
            <person name="Hamlin N."/>
            <person name="Holroyd S."/>
            <person name="Jagels K."/>
            <person name="Karlyshev A.V."/>
            <person name="Leather S."/>
            <person name="Moule S."/>
            <person name="Oyston P.C.F."/>
            <person name="Quail M.A."/>
            <person name="Rutherford K.M."/>
            <person name="Simmonds M."/>
            <person name="Skelton J."/>
            <person name="Stevens K."/>
            <person name="Whitehead S."/>
            <person name="Barrell B.G."/>
        </authorList>
    </citation>
    <scope>NUCLEOTIDE SEQUENCE [LARGE SCALE GENOMIC DNA]</scope>
    <source>
        <strain>CO-92 / Biovar Orientalis</strain>
    </source>
</reference>
<reference key="2">
    <citation type="journal article" date="2002" name="J. Bacteriol.">
        <title>Genome sequence of Yersinia pestis KIM.</title>
        <authorList>
            <person name="Deng W."/>
            <person name="Burland V."/>
            <person name="Plunkett G. III"/>
            <person name="Boutin A."/>
            <person name="Mayhew G.F."/>
            <person name="Liss P."/>
            <person name="Perna N.T."/>
            <person name="Rose D.J."/>
            <person name="Mau B."/>
            <person name="Zhou S."/>
            <person name="Schwartz D.C."/>
            <person name="Fetherston J.D."/>
            <person name="Lindler L.E."/>
            <person name="Brubaker R.R."/>
            <person name="Plano G.V."/>
            <person name="Straley S.C."/>
            <person name="McDonough K.A."/>
            <person name="Nilles M.L."/>
            <person name="Matson J.S."/>
            <person name="Blattner F.R."/>
            <person name="Perry R.D."/>
        </authorList>
    </citation>
    <scope>NUCLEOTIDE SEQUENCE [LARGE SCALE GENOMIC DNA]</scope>
    <source>
        <strain>KIM10+ / Biovar Mediaevalis</strain>
    </source>
</reference>
<reference key="3">
    <citation type="journal article" date="2004" name="DNA Res.">
        <title>Complete genome sequence of Yersinia pestis strain 91001, an isolate avirulent to humans.</title>
        <authorList>
            <person name="Song Y."/>
            <person name="Tong Z."/>
            <person name="Wang J."/>
            <person name="Wang L."/>
            <person name="Guo Z."/>
            <person name="Han Y."/>
            <person name="Zhang J."/>
            <person name="Pei D."/>
            <person name="Zhou D."/>
            <person name="Qin H."/>
            <person name="Pang X."/>
            <person name="Han Y."/>
            <person name="Zhai J."/>
            <person name="Li M."/>
            <person name="Cui B."/>
            <person name="Qi Z."/>
            <person name="Jin L."/>
            <person name="Dai R."/>
            <person name="Chen F."/>
            <person name="Li S."/>
            <person name="Ye C."/>
            <person name="Du Z."/>
            <person name="Lin W."/>
            <person name="Wang J."/>
            <person name="Yu J."/>
            <person name="Yang H."/>
            <person name="Wang J."/>
            <person name="Huang P."/>
            <person name="Yang R."/>
        </authorList>
    </citation>
    <scope>NUCLEOTIDE SEQUENCE [LARGE SCALE GENOMIC DNA]</scope>
    <source>
        <strain>91001 / Biovar Mediaevalis</strain>
    </source>
</reference>
<keyword id="KW-0479">Metal-binding</keyword>
<keyword id="KW-0520">NAD</keyword>
<keyword id="KW-0560">Oxidoreductase</keyword>
<keyword id="KW-1185">Reference proteome</keyword>